<dbReference type="EC" id="3.5.1.108" evidence="1"/>
<dbReference type="EMBL" id="CP001172">
    <property type="protein sequence ID" value="ACJ57401.1"/>
    <property type="molecule type" value="Genomic_DNA"/>
</dbReference>
<dbReference type="RefSeq" id="WP_000240700.1">
    <property type="nucleotide sequence ID" value="NZ_CP001172.1"/>
</dbReference>
<dbReference type="SMR" id="B7GV79"/>
<dbReference type="HOGENOM" id="CLU_046528_1_0_6"/>
<dbReference type="UniPathway" id="UPA00359">
    <property type="reaction ID" value="UER00478"/>
</dbReference>
<dbReference type="Proteomes" id="UP000006924">
    <property type="component" value="Chromosome"/>
</dbReference>
<dbReference type="GO" id="GO:0016020">
    <property type="term" value="C:membrane"/>
    <property type="evidence" value="ECO:0007669"/>
    <property type="project" value="GOC"/>
</dbReference>
<dbReference type="GO" id="GO:0046872">
    <property type="term" value="F:metal ion binding"/>
    <property type="evidence" value="ECO:0007669"/>
    <property type="project" value="UniProtKB-KW"/>
</dbReference>
<dbReference type="GO" id="GO:0103117">
    <property type="term" value="F:UDP-3-O-acyl-N-acetylglucosamine deacetylase activity"/>
    <property type="evidence" value="ECO:0007669"/>
    <property type="project" value="UniProtKB-UniRule"/>
</dbReference>
<dbReference type="GO" id="GO:0009245">
    <property type="term" value="P:lipid A biosynthetic process"/>
    <property type="evidence" value="ECO:0007669"/>
    <property type="project" value="UniProtKB-UniRule"/>
</dbReference>
<dbReference type="Gene3D" id="3.30.230.20">
    <property type="entry name" value="lpxc deacetylase, domain 1"/>
    <property type="match status" value="1"/>
</dbReference>
<dbReference type="Gene3D" id="3.30.1700.10">
    <property type="entry name" value="lpxc deacetylase, domain 2"/>
    <property type="match status" value="1"/>
</dbReference>
<dbReference type="HAMAP" id="MF_00388">
    <property type="entry name" value="LpxC"/>
    <property type="match status" value="1"/>
</dbReference>
<dbReference type="InterPro" id="IPR020568">
    <property type="entry name" value="Ribosomal_Su5_D2-typ_SF"/>
</dbReference>
<dbReference type="InterPro" id="IPR004463">
    <property type="entry name" value="UDP-acyl_GlcNac_deAcase"/>
</dbReference>
<dbReference type="InterPro" id="IPR011334">
    <property type="entry name" value="UDP-acyl_GlcNac_deAcase_C"/>
</dbReference>
<dbReference type="InterPro" id="IPR015870">
    <property type="entry name" value="UDP-acyl_N-AcGlcN_deAcase_N"/>
</dbReference>
<dbReference type="NCBIfam" id="TIGR00325">
    <property type="entry name" value="lpxC"/>
    <property type="match status" value="1"/>
</dbReference>
<dbReference type="PANTHER" id="PTHR33694">
    <property type="entry name" value="UDP-3-O-ACYL-N-ACETYLGLUCOSAMINE DEACETYLASE 1, MITOCHONDRIAL-RELATED"/>
    <property type="match status" value="1"/>
</dbReference>
<dbReference type="PANTHER" id="PTHR33694:SF1">
    <property type="entry name" value="UDP-3-O-ACYL-N-ACETYLGLUCOSAMINE DEACETYLASE 1, MITOCHONDRIAL-RELATED"/>
    <property type="match status" value="1"/>
</dbReference>
<dbReference type="Pfam" id="PF03331">
    <property type="entry name" value="LpxC"/>
    <property type="match status" value="1"/>
</dbReference>
<dbReference type="SUPFAM" id="SSF54211">
    <property type="entry name" value="Ribosomal protein S5 domain 2-like"/>
    <property type="match status" value="2"/>
</dbReference>
<evidence type="ECO:0000255" key="1">
    <source>
        <dbReference type="HAMAP-Rule" id="MF_00388"/>
    </source>
</evidence>
<feature type="chain" id="PRO_1000190876" description="UDP-3-O-acyl-N-acetylglucosamine deacetylase">
    <location>
        <begin position="1"/>
        <end position="300"/>
    </location>
</feature>
<feature type="active site" description="Proton donor" evidence="1">
    <location>
        <position position="264"/>
    </location>
</feature>
<feature type="binding site" evidence="1">
    <location>
        <position position="78"/>
    </location>
    <ligand>
        <name>Zn(2+)</name>
        <dbReference type="ChEBI" id="CHEBI:29105"/>
    </ligand>
</feature>
<feature type="binding site" evidence="1">
    <location>
        <position position="237"/>
    </location>
    <ligand>
        <name>Zn(2+)</name>
        <dbReference type="ChEBI" id="CHEBI:29105"/>
    </ligand>
</feature>
<feature type="binding site" evidence="1">
    <location>
        <position position="241"/>
    </location>
    <ligand>
        <name>Zn(2+)</name>
        <dbReference type="ChEBI" id="CHEBI:29105"/>
    </ligand>
</feature>
<protein>
    <recommendedName>
        <fullName evidence="1">UDP-3-O-acyl-N-acetylglucosamine deacetylase</fullName>
        <shortName evidence="1">UDP-3-O-acyl-GlcNAc deacetylase</shortName>
        <ecNumber evidence="1">3.5.1.108</ecNumber>
    </recommendedName>
    <alternativeName>
        <fullName evidence="1">UDP-3-O-[R-3-hydroxymyristoyl]-N-acetylglucosamine deacetylase</fullName>
    </alternativeName>
</protein>
<accession>B7GV79</accession>
<sequence length="300" mass="32993">MVKQRTLNRVVKASGIGLHSGQKVMINFIPHTVDGGIVFRRIDLDPPVDIPANALLIQEAFMCSNLVTGDIKVGTIEHVMSAIAGLGIDNLIVEVSASEVPIMDGSAGPFIYLLMQGGLREQDAPKKFIKILKPVEALIDDKKAIFSPHNGFQLNFTIDFDHPAFAKEYQSATIDFSTETFVYEVSEARTFGFMKDLDYLKANNLALGASLDNAIGVDDTGVVNEEGLRFADEFVRHKILDAVGDLYLLGHQIIAKFDGYKSGHALNNQLLRNVQSDPSNYEIVTFDDEKDCPIPYVSVT</sequence>
<proteinExistence type="inferred from homology"/>
<name>LPXC_ACIB3</name>
<comment type="function">
    <text evidence="1">Catalyzes the hydrolysis of UDP-3-O-myristoyl-N-acetylglucosamine to form UDP-3-O-myristoylglucosamine and acetate, the committed step in lipid A biosynthesis.</text>
</comment>
<comment type="catalytic activity">
    <reaction evidence="1">
        <text>a UDP-3-O-[(3R)-3-hydroxyacyl]-N-acetyl-alpha-D-glucosamine + H2O = a UDP-3-O-[(3R)-3-hydroxyacyl]-alpha-D-glucosamine + acetate</text>
        <dbReference type="Rhea" id="RHEA:67816"/>
        <dbReference type="ChEBI" id="CHEBI:15377"/>
        <dbReference type="ChEBI" id="CHEBI:30089"/>
        <dbReference type="ChEBI" id="CHEBI:137740"/>
        <dbReference type="ChEBI" id="CHEBI:173225"/>
        <dbReference type="EC" id="3.5.1.108"/>
    </reaction>
</comment>
<comment type="cofactor">
    <cofactor evidence="1">
        <name>Zn(2+)</name>
        <dbReference type="ChEBI" id="CHEBI:29105"/>
    </cofactor>
</comment>
<comment type="pathway">
    <text evidence="1">Glycolipid biosynthesis; lipid IV(A) biosynthesis; lipid IV(A) from (3R)-3-hydroxytetradecanoyl-[acyl-carrier-protein] and UDP-N-acetyl-alpha-D-glucosamine: step 2/6.</text>
</comment>
<comment type="similarity">
    <text evidence="1">Belongs to the LpxC family.</text>
</comment>
<gene>
    <name evidence="1" type="primary">lpxC</name>
    <name type="ordered locus">ABBFA_000151</name>
</gene>
<organism>
    <name type="scientific">Acinetobacter baumannii (strain AB307-0294)</name>
    <dbReference type="NCBI Taxonomy" id="557600"/>
    <lineage>
        <taxon>Bacteria</taxon>
        <taxon>Pseudomonadati</taxon>
        <taxon>Pseudomonadota</taxon>
        <taxon>Gammaproteobacteria</taxon>
        <taxon>Moraxellales</taxon>
        <taxon>Moraxellaceae</taxon>
        <taxon>Acinetobacter</taxon>
        <taxon>Acinetobacter calcoaceticus/baumannii complex</taxon>
    </lineage>
</organism>
<reference key="1">
    <citation type="journal article" date="2008" name="J. Bacteriol.">
        <title>Comparative genome sequence analysis of multidrug-resistant Acinetobacter baumannii.</title>
        <authorList>
            <person name="Adams M.D."/>
            <person name="Goglin K."/>
            <person name="Molyneaux N."/>
            <person name="Hujer K.M."/>
            <person name="Lavender H."/>
            <person name="Jamison J.J."/>
            <person name="MacDonald I.J."/>
            <person name="Martin K.M."/>
            <person name="Russo T."/>
            <person name="Campagnari A.A."/>
            <person name="Hujer A.M."/>
            <person name="Bonomo R.A."/>
            <person name="Gill S.R."/>
        </authorList>
    </citation>
    <scope>NUCLEOTIDE SEQUENCE [LARGE SCALE GENOMIC DNA]</scope>
    <source>
        <strain>AB307-0294</strain>
    </source>
</reference>
<keyword id="KW-0378">Hydrolase</keyword>
<keyword id="KW-0441">Lipid A biosynthesis</keyword>
<keyword id="KW-0444">Lipid biosynthesis</keyword>
<keyword id="KW-0443">Lipid metabolism</keyword>
<keyword id="KW-0479">Metal-binding</keyword>
<keyword id="KW-0862">Zinc</keyword>